<comment type="function">
    <text evidence="1">Catalyzes the conversion of acetate into acetyl-CoA (AcCoA), an essential intermediate at the junction of anabolic and catabolic pathways. AcsA undergoes a two-step reaction. In the first half reaction, AcsA combines acetate with ATP to form acetyl-adenylate (AcAMP) intermediate. In the second half reaction, it can then transfer the acetyl group from AcAMP to the sulfhydryl group of CoA, forming the product AcCoA.</text>
</comment>
<comment type="catalytic activity">
    <reaction evidence="1">
        <text>acetate + ATP + CoA = acetyl-CoA + AMP + diphosphate</text>
        <dbReference type="Rhea" id="RHEA:23176"/>
        <dbReference type="ChEBI" id="CHEBI:30089"/>
        <dbReference type="ChEBI" id="CHEBI:30616"/>
        <dbReference type="ChEBI" id="CHEBI:33019"/>
        <dbReference type="ChEBI" id="CHEBI:57287"/>
        <dbReference type="ChEBI" id="CHEBI:57288"/>
        <dbReference type="ChEBI" id="CHEBI:456215"/>
        <dbReference type="EC" id="6.2.1.1"/>
    </reaction>
</comment>
<comment type="cofactor">
    <cofactor evidence="1">
        <name>Mg(2+)</name>
        <dbReference type="ChEBI" id="CHEBI:18420"/>
    </cofactor>
</comment>
<comment type="PTM">
    <text evidence="1">Acetylated. Deacetylation by the SIR2-homolog deacetylase activates the enzyme.</text>
</comment>
<comment type="similarity">
    <text evidence="1">Belongs to the ATP-dependent AMP-binding enzyme family.</text>
</comment>
<comment type="sequence caution" evidence="2">
    <conflict type="erroneous initiation">
        <sequence resource="EMBL-CDS" id="AAF93472"/>
    </conflict>
    <text>Extended N-terminus.</text>
</comment>
<dbReference type="EC" id="6.2.1.1" evidence="1"/>
<dbReference type="EMBL" id="AE003852">
    <property type="protein sequence ID" value="AAF93472.1"/>
    <property type="status" value="ALT_INIT"/>
    <property type="molecule type" value="Genomic_DNA"/>
</dbReference>
<dbReference type="PIR" id="D82339">
    <property type="entry name" value="D82339"/>
</dbReference>
<dbReference type="RefSeq" id="NP_229953.2">
    <property type="nucleotide sequence ID" value="NC_002505.1"/>
</dbReference>
<dbReference type="SMR" id="Q9KV59"/>
<dbReference type="STRING" id="243277.VC_0298"/>
<dbReference type="DNASU" id="2614968"/>
<dbReference type="EnsemblBacteria" id="AAF93472">
    <property type="protein sequence ID" value="AAF93472"/>
    <property type="gene ID" value="VC_0298"/>
</dbReference>
<dbReference type="KEGG" id="vch:VC_0298"/>
<dbReference type="PATRIC" id="fig|243277.26.peg.280"/>
<dbReference type="eggNOG" id="COG0365">
    <property type="taxonomic scope" value="Bacteria"/>
</dbReference>
<dbReference type="HOGENOM" id="CLU_000022_3_6_6"/>
<dbReference type="PHI-base" id="PHI:8478"/>
<dbReference type="Proteomes" id="UP000000584">
    <property type="component" value="Chromosome 1"/>
</dbReference>
<dbReference type="GO" id="GO:0005829">
    <property type="term" value="C:cytosol"/>
    <property type="evidence" value="ECO:0000318"/>
    <property type="project" value="GO_Central"/>
</dbReference>
<dbReference type="GO" id="GO:0003987">
    <property type="term" value="F:acetate-CoA ligase activity"/>
    <property type="evidence" value="ECO:0000318"/>
    <property type="project" value="GO_Central"/>
</dbReference>
<dbReference type="GO" id="GO:0016208">
    <property type="term" value="F:AMP binding"/>
    <property type="evidence" value="ECO:0007669"/>
    <property type="project" value="InterPro"/>
</dbReference>
<dbReference type="GO" id="GO:0005524">
    <property type="term" value="F:ATP binding"/>
    <property type="evidence" value="ECO:0007669"/>
    <property type="project" value="UniProtKB-KW"/>
</dbReference>
<dbReference type="GO" id="GO:0046872">
    <property type="term" value="F:metal ion binding"/>
    <property type="evidence" value="ECO:0007669"/>
    <property type="project" value="UniProtKB-KW"/>
</dbReference>
<dbReference type="GO" id="GO:0006085">
    <property type="term" value="P:acetyl-CoA biosynthetic process"/>
    <property type="evidence" value="ECO:0000318"/>
    <property type="project" value="GO_Central"/>
</dbReference>
<dbReference type="GO" id="GO:0019427">
    <property type="term" value="P:acetyl-CoA biosynthetic process from acetate"/>
    <property type="evidence" value="ECO:0007669"/>
    <property type="project" value="InterPro"/>
</dbReference>
<dbReference type="CDD" id="cd05966">
    <property type="entry name" value="ACS"/>
    <property type="match status" value="1"/>
</dbReference>
<dbReference type="FunFam" id="3.30.300.30:FF:000004">
    <property type="entry name" value="Acetyl-coenzyme A synthetase"/>
    <property type="match status" value="1"/>
</dbReference>
<dbReference type="FunFam" id="3.40.50.12780:FF:000001">
    <property type="entry name" value="Acetyl-coenzyme A synthetase"/>
    <property type="match status" value="1"/>
</dbReference>
<dbReference type="Gene3D" id="3.30.300.30">
    <property type="match status" value="1"/>
</dbReference>
<dbReference type="Gene3D" id="3.40.50.12780">
    <property type="entry name" value="N-terminal domain of ligase-like"/>
    <property type="match status" value="1"/>
</dbReference>
<dbReference type="HAMAP" id="MF_01123">
    <property type="entry name" value="Ac_CoA_synth"/>
    <property type="match status" value="1"/>
</dbReference>
<dbReference type="InterPro" id="IPR011904">
    <property type="entry name" value="Ac_CoA_lig"/>
</dbReference>
<dbReference type="InterPro" id="IPR032387">
    <property type="entry name" value="ACAS_N"/>
</dbReference>
<dbReference type="InterPro" id="IPR025110">
    <property type="entry name" value="AMP-bd_C"/>
</dbReference>
<dbReference type="InterPro" id="IPR045851">
    <property type="entry name" value="AMP-bd_C_sf"/>
</dbReference>
<dbReference type="InterPro" id="IPR020845">
    <property type="entry name" value="AMP-binding_CS"/>
</dbReference>
<dbReference type="InterPro" id="IPR000873">
    <property type="entry name" value="AMP-dep_synth/lig_dom"/>
</dbReference>
<dbReference type="InterPro" id="IPR042099">
    <property type="entry name" value="ANL_N_sf"/>
</dbReference>
<dbReference type="NCBIfam" id="TIGR02188">
    <property type="entry name" value="Ac_CoA_lig_AcsA"/>
    <property type="match status" value="1"/>
</dbReference>
<dbReference type="NCBIfam" id="NF001208">
    <property type="entry name" value="PRK00174.1"/>
    <property type="match status" value="1"/>
</dbReference>
<dbReference type="PANTHER" id="PTHR24095">
    <property type="entry name" value="ACETYL-COENZYME A SYNTHETASE"/>
    <property type="match status" value="1"/>
</dbReference>
<dbReference type="PANTHER" id="PTHR24095:SF243">
    <property type="entry name" value="ACETYL-COENZYME A SYNTHETASE"/>
    <property type="match status" value="1"/>
</dbReference>
<dbReference type="Pfam" id="PF16177">
    <property type="entry name" value="ACAS_N"/>
    <property type="match status" value="1"/>
</dbReference>
<dbReference type="Pfam" id="PF00501">
    <property type="entry name" value="AMP-binding"/>
    <property type="match status" value="1"/>
</dbReference>
<dbReference type="Pfam" id="PF13193">
    <property type="entry name" value="AMP-binding_C"/>
    <property type="match status" value="1"/>
</dbReference>
<dbReference type="SUPFAM" id="SSF56801">
    <property type="entry name" value="Acetyl-CoA synthetase-like"/>
    <property type="match status" value="1"/>
</dbReference>
<dbReference type="PROSITE" id="PS00455">
    <property type="entry name" value="AMP_BINDING"/>
    <property type="match status" value="1"/>
</dbReference>
<sequence length="649" mass="71895">MSEAHIYPVKQNIKAHTHADNDTYLAMYQQSIKDPEGFWSEHGKIVDWIKPFTKVKHTSFDPGHIDIRWFEDGTLNVSANCIDRHLATRGDQVAIIWEGDDPTQDKTLTYKQLHQEVCRFANALKEQGVRKGDVVCIYMPMVPEAAVAMLACTRIGAVHTIVFGGFSPEALAGRIIDSNAKLVITADEGVRGGRAVPLKKNVDEALCNPEVKNISKVMVLKRTGGNVAWHEHRDIWWHEATAKASDNCPPEEMKAEDPLFILYTSGSTGKPKGVLHTTGGYLVYATMTFKYVFDYQPNEVFWCTADVGWITGHSYLVYGPLANGAKTILFEGVPNYPTTARMSEVVDKHKVNILYTAPTAIRALMAKGDEAIKGTSRDSLRIMGSVGEPINPEAWEWYYRTIGNEKSPIVDTWWQTETGGILITPLPGATALKPGSATRPFFGVQPALVDNMGEIVEGATEGNLVLLDSWPGQMRTVYGDHDRFEQTYFSTFKGMYFTGDGARRDEDGYYWITGRVDDVLNVSGHRMGTAEIESALVAFNKIAEAAVVGVPHDIKGQAIYAYITLNDGVYPSAELHKEVKDWVRKEIGAIATPDVLHWTDALPKTRSGKIMRRILRKIATGDTSNLGDTSTLADPSVVDRLIAEKAQLK</sequence>
<accession>Q9KV59</accession>
<reference key="1">
    <citation type="journal article" date="2000" name="Nature">
        <title>DNA sequence of both chromosomes of the cholera pathogen Vibrio cholerae.</title>
        <authorList>
            <person name="Heidelberg J.F."/>
            <person name="Eisen J.A."/>
            <person name="Nelson W.C."/>
            <person name="Clayton R.A."/>
            <person name="Gwinn M.L."/>
            <person name="Dodson R.J."/>
            <person name="Haft D.H."/>
            <person name="Hickey E.K."/>
            <person name="Peterson J.D."/>
            <person name="Umayam L.A."/>
            <person name="Gill S.R."/>
            <person name="Nelson K.E."/>
            <person name="Read T.D."/>
            <person name="Tettelin H."/>
            <person name="Richardson D.L."/>
            <person name="Ermolaeva M.D."/>
            <person name="Vamathevan J.J."/>
            <person name="Bass S."/>
            <person name="Qin H."/>
            <person name="Dragoi I."/>
            <person name="Sellers P."/>
            <person name="McDonald L.A."/>
            <person name="Utterback T.R."/>
            <person name="Fleischmann R.D."/>
            <person name="Nierman W.C."/>
            <person name="White O."/>
            <person name="Salzberg S.L."/>
            <person name="Smith H.O."/>
            <person name="Colwell R.R."/>
            <person name="Mekalanos J.J."/>
            <person name="Venter J.C."/>
            <person name="Fraser C.M."/>
        </authorList>
    </citation>
    <scope>NUCLEOTIDE SEQUENCE [LARGE SCALE GENOMIC DNA]</scope>
    <source>
        <strain>ATCC 39315 / El Tor Inaba N16961</strain>
    </source>
</reference>
<evidence type="ECO:0000255" key="1">
    <source>
        <dbReference type="HAMAP-Rule" id="MF_01123"/>
    </source>
</evidence>
<evidence type="ECO:0000305" key="2"/>
<name>ACSA_VIBCH</name>
<feature type="chain" id="PRO_0000208392" description="Acetyl-coenzyme A synthetase">
    <location>
        <begin position="1"/>
        <end position="649"/>
    </location>
</feature>
<feature type="binding site" evidence="1">
    <location>
        <begin position="191"/>
        <end position="194"/>
    </location>
    <ligand>
        <name>CoA</name>
        <dbReference type="ChEBI" id="CHEBI:57287"/>
    </ligand>
</feature>
<feature type="binding site" evidence="1">
    <location>
        <position position="311"/>
    </location>
    <ligand>
        <name>CoA</name>
        <dbReference type="ChEBI" id="CHEBI:57287"/>
    </ligand>
</feature>
<feature type="binding site" evidence="1">
    <location>
        <position position="335"/>
    </location>
    <ligand>
        <name>CoA</name>
        <dbReference type="ChEBI" id="CHEBI:57287"/>
    </ligand>
</feature>
<feature type="binding site" evidence="1">
    <location>
        <begin position="387"/>
        <end position="389"/>
    </location>
    <ligand>
        <name>ATP</name>
        <dbReference type="ChEBI" id="CHEBI:30616"/>
    </ligand>
</feature>
<feature type="binding site" evidence="1">
    <location>
        <begin position="411"/>
        <end position="416"/>
    </location>
    <ligand>
        <name>ATP</name>
        <dbReference type="ChEBI" id="CHEBI:30616"/>
    </ligand>
</feature>
<feature type="binding site" evidence="1">
    <location>
        <position position="500"/>
    </location>
    <ligand>
        <name>ATP</name>
        <dbReference type="ChEBI" id="CHEBI:30616"/>
    </ligand>
</feature>
<feature type="binding site" evidence="1">
    <location>
        <position position="515"/>
    </location>
    <ligand>
        <name>ATP</name>
        <dbReference type="ChEBI" id="CHEBI:30616"/>
    </ligand>
</feature>
<feature type="binding site" evidence="1">
    <location>
        <position position="523"/>
    </location>
    <ligand>
        <name>CoA</name>
        <dbReference type="ChEBI" id="CHEBI:57287"/>
    </ligand>
</feature>
<feature type="binding site" evidence="1">
    <location>
        <position position="526"/>
    </location>
    <ligand>
        <name>ATP</name>
        <dbReference type="ChEBI" id="CHEBI:30616"/>
    </ligand>
</feature>
<feature type="binding site" evidence="1">
    <location>
        <position position="537"/>
    </location>
    <ligand>
        <name>Mg(2+)</name>
        <dbReference type="ChEBI" id="CHEBI:18420"/>
    </ligand>
</feature>
<feature type="binding site" evidence="1">
    <location>
        <position position="539"/>
    </location>
    <ligand>
        <name>Mg(2+)</name>
        <dbReference type="ChEBI" id="CHEBI:18420"/>
    </ligand>
</feature>
<feature type="binding site" evidence="1">
    <location>
        <position position="542"/>
    </location>
    <ligand>
        <name>Mg(2+)</name>
        <dbReference type="ChEBI" id="CHEBI:18420"/>
    </ligand>
</feature>
<feature type="binding site" evidence="1">
    <location>
        <position position="584"/>
    </location>
    <ligand>
        <name>CoA</name>
        <dbReference type="ChEBI" id="CHEBI:57287"/>
    </ligand>
</feature>
<feature type="modified residue" description="N6-acetyllysine" evidence="1">
    <location>
        <position position="609"/>
    </location>
</feature>
<protein>
    <recommendedName>
        <fullName evidence="1">Acetyl-coenzyme A synthetase</fullName>
        <shortName evidence="1">AcCoA synthetase</shortName>
        <shortName evidence="1">Acs</shortName>
        <ecNumber evidence="1">6.2.1.1</ecNumber>
    </recommendedName>
    <alternativeName>
        <fullName evidence="1">Acetate--CoA ligase</fullName>
    </alternativeName>
    <alternativeName>
        <fullName evidence="1">Acyl-activating enzyme</fullName>
    </alternativeName>
</protein>
<gene>
    <name evidence="1" type="primary">acsA</name>
    <name type="ordered locus">VC_0298</name>
</gene>
<keyword id="KW-0007">Acetylation</keyword>
<keyword id="KW-0067">ATP-binding</keyword>
<keyword id="KW-0436">Ligase</keyword>
<keyword id="KW-0460">Magnesium</keyword>
<keyword id="KW-0479">Metal-binding</keyword>
<keyword id="KW-0547">Nucleotide-binding</keyword>
<keyword id="KW-1185">Reference proteome</keyword>
<organism>
    <name type="scientific">Vibrio cholerae serotype O1 (strain ATCC 39315 / El Tor Inaba N16961)</name>
    <dbReference type="NCBI Taxonomy" id="243277"/>
    <lineage>
        <taxon>Bacteria</taxon>
        <taxon>Pseudomonadati</taxon>
        <taxon>Pseudomonadota</taxon>
        <taxon>Gammaproteobacteria</taxon>
        <taxon>Vibrionales</taxon>
        <taxon>Vibrionaceae</taxon>
        <taxon>Vibrio</taxon>
    </lineage>
</organism>
<proteinExistence type="inferred from homology"/>